<proteinExistence type="inferred from homology"/>
<name>GLMU_PSYCK</name>
<keyword id="KW-0012">Acyltransferase</keyword>
<keyword id="KW-0133">Cell shape</keyword>
<keyword id="KW-0961">Cell wall biogenesis/degradation</keyword>
<keyword id="KW-0963">Cytoplasm</keyword>
<keyword id="KW-0460">Magnesium</keyword>
<keyword id="KW-0479">Metal-binding</keyword>
<keyword id="KW-0511">Multifunctional enzyme</keyword>
<keyword id="KW-0548">Nucleotidyltransferase</keyword>
<keyword id="KW-0573">Peptidoglycan synthesis</keyword>
<keyword id="KW-0677">Repeat</keyword>
<keyword id="KW-0808">Transferase</keyword>
<reference key="1">
    <citation type="submission" date="2006-03" db="EMBL/GenBank/DDBJ databases">
        <title>Complete sequence of chromosome of Psychrobacter cryohalolentis K5.</title>
        <authorList>
            <consortium name="US DOE Joint Genome Institute"/>
            <person name="Copeland A."/>
            <person name="Lucas S."/>
            <person name="Lapidus A."/>
            <person name="Barry K."/>
            <person name="Detter J.C."/>
            <person name="Glavina T."/>
            <person name="Hammon N."/>
            <person name="Israni S."/>
            <person name="Dalin E."/>
            <person name="Tice H."/>
            <person name="Pitluck S."/>
            <person name="Brettin T."/>
            <person name="Bruce D."/>
            <person name="Han C."/>
            <person name="Tapia R."/>
            <person name="Sims D.R."/>
            <person name="Gilna P."/>
            <person name="Schmutz J."/>
            <person name="Larimer F."/>
            <person name="Land M."/>
            <person name="Hauser L."/>
            <person name="Kyrpides N."/>
            <person name="Kim E."/>
            <person name="Richardson P."/>
        </authorList>
    </citation>
    <scope>NUCLEOTIDE SEQUENCE [LARGE SCALE GENOMIC DNA]</scope>
    <source>
        <strain>ATCC BAA-1226 / DSM 17306 / VKM B-2378 / K5</strain>
    </source>
</reference>
<feature type="chain" id="PRO_0000244302" description="Bifunctional protein GlmU">
    <location>
        <begin position="1"/>
        <end position="458"/>
    </location>
</feature>
<feature type="region of interest" description="Pyrophosphorylase" evidence="1">
    <location>
        <begin position="1"/>
        <end position="232"/>
    </location>
</feature>
<feature type="region of interest" description="Linker" evidence="1">
    <location>
        <begin position="233"/>
        <end position="253"/>
    </location>
</feature>
<feature type="region of interest" description="N-acetyltransferase" evidence="1">
    <location>
        <begin position="254"/>
        <end position="458"/>
    </location>
</feature>
<feature type="active site" description="Proton acceptor" evidence="1">
    <location>
        <position position="366"/>
    </location>
</feature>
<feature type="binding site" evidence="1">
    <location>
        <begin position="10"/>
        <end position="13"/>
    </location>
    <ligand>
        <name>UDP-N-acetyl-alpha-D-glucosamine</name>
        <dbReference type="ChEBI" id="CHEBI:57705"/>
    </ligand>
</feature>
<feature type="binding site" evidence="1">
    <location>
        <position position="24"/>
    </location>
    <ligand>
        <name>UDP-N-acetyl-alpha-D-glucosamine</name>
        <dbReference type="ChEBI" id="CHEBI:57705"/>
    </ligand>
</feature>
<feature type="binding site" evidence="1">
    <location>
        <position position="79"/>
    </location>
    <ligand>
        <name>UDP-N-acetyl-alpha-D-glucosamine</name>
        <dbReference type="ChEBI" id="CHEBI:57705"/>
    </ligand>
</feature>
<feature type="binding site" evidence="1">
    <location>
        <begin position="84"/>
        <end position="85"/>
    </location>
    <ligand>
        <name>UDP-N-acetyl-alpha-D-glucosamine</name>
        <dbReference type="ChEBI" id="CHEBI:57705"/>
    </ligand>
</feature>
<feature type="binding site" evidence="1">
    <location>
        <begin position="106"/>
        <end position="108"/>
    </location>
    <ligand>
        <name>UDP-N-acetyl-alpha-D-glucosamine</name>
        <dbReference type="ChEBI" id="CHEBI:57705"/>
    </ligand>
</feature>
<feature type="binding site" evidence="1">
    <location>
        <position position="108"/>
    </location>
    <ligand>
        <name>Mg(2+)</name>
        <dbReference type="ChEBI" id="CHEBI:18420"/>
    </ligand>
</feature>
<feature type="binding site" evidence="1">
    <location>
        <position position="142"/>
    </location>
    <ligand>
        <name>UDP-N-acetyl-alpha-D-glucosamine</name>
        <dbReference type="ChEBI" id="CHEBI:57705"/>
    </ligand>
</feature>
<feature type="binding site" evidence="1">
    <location>
        <position position="157"/>
    </location>
    <ligand>
        <name>UDP-N-acetyl-alpha-D-glucosamine</name>
        <dbReference type="ChEBI" id="CHEBI:57705"/>
    </ligand>
</feature>
<feature type="binding site" evidence="1">
    <location>
        <position position="172"/>
    </location>
    <ligand>
        <name>UDP-N-acetyl-alpha-D-glucosamine</name>
        <dbReference type="ChEBI" id="CHEBI:57705"/>
    </ligand>
</feature>
<feature type="binding site" evidence="1">
    <location>
        <position position="230"/>
    </location>
    <ligand>
        <name>Mg(2+)</name>
        <dbReference type="ChEBI" id="CHEBI:18420"/>
    </ligand>
</feature>
<feature type="binding site" evidence="1">
    <location>
        <position position="230"/>
    </location>
    <ligand>
        <name>UDP-N-acetyl-alpha-D-glucosamine</name>
        <dbReference type="ChEBI" id="CHEBI:57705"/>
    </ligand>
</feature>
<feature type="binding site" evidence="1">
    <location>
        <position position="336"/>
    </location>
    <ligand>
        <name>UDP-N-acetyl-alpha-D-glucosamine</name>
        <dbReference type="ChEBI" id="CHEBI:57705"/>
    </ligand>
</feature>
<feature type="binding site" evidence="1">
    <location>
        <position position="354"/>
    </location>
    <ligand>
        <name>UDP-N-acetyl-alpha-D-glucosamine</name>
        <dbReference type="ChEBI" id="CHEBI:57705"/>
    </ligand>
</feature>
<feature type="binding site" evidence="1">
    <location>
        <position position="369"/>
    </location>
    <ligand>
        <name>UDP-N-acetyl-alpha-D-glucosamine</name>
        <dbReference type="ChEBI" id="CHEBI:57705"/>
    </ligand>
</feature>
<feature type="binding site" evidence="1">
    <location>
        <position position="380"/>
    </location>
    <ligand>
        <name>UDP-N-acetyl-alpha-D-glucosamine</name>
        <dbReference type="ChEBI" id="CHEBI:57705"/>
    </ligand>
</feature>
<feature type="binding site" evidence="1">
    <location>
        <position position="383"/>
    </location>
    <ligand>
        <name>acetyl-CoA</name>
        <dbReference type="ChEBI" id="CHEBI:57288"/>
    </ligand>
</feature>
<feature type="binding site" evidence="1">
    <location>
        <begin position="389"/>
        <end position="390"/>
    </location>
    <ligand>
        <name>acetyl-CoA</name>
        <dbReference type="ChEBI" id="CHEBI:57288"/>
    </ligand>
</feature>
<feature type="binding site" evidence="1">
    <location>
        <position position="408"/>
    </location>
    <ligand>
        <name>acetyl-CoA</name>
        <dbReference type="ChEBI" id="CHEBI:57288"/>
    </ligand>
</feature>
<feature type="binding site" evidence="1">
    <location>
        <position position="426"/>
    </location>
    <ligand>
        <name>acetyl-CoA</name>
        <dbReference type="ChEBI" id="CHEBI:57288"/>
    </ligand>
</feature>
<feature type="binding site" evidence="1">
    <location>
        <position position="443"/>
    </location>
    <ligand>
        <name>acetyl-CoA</name>
        <dbReference type="ChEBI" id="CHEBI:57288"/>
    </ligand>
</feature>
<organism>
    <name type="scientific">Psychrobacter cryohalolentis (strain ATCC BAA-1226 / DSM 17306 / VKM B-2378 / K5)</name>
    <dbReference type="NCBI Taxonomy" id="335284"/>
    <lineage>
        <taxon>Bacteria</taxon>
        <taxon>Pseudomonadati</taxon>
        <taxon>Pseudomonadota</taxon>
        <taxon>Gammaproteobacteria</taxon>
        <taxon>Moraxellales</taxon>
        <taxon>Moraxellaceae</taxon>
        <taxon>Psychrobacter</taxon>
    </lineage>
</organism>
<comment type="function">
    <text evidence="1">Catalyzes the last two sequential reactions in the de novo biosynthetic pathway for UDP-N-acetylglucosamine (UDP-GlcNAc). The C-terminal domain catalyzes the transfer of acetyl group from acetyl coenzyme A to glucosamine-1-phosphate (GlcN-1-P) to produce N-acetylglucosamine-1-phosphate (GlcNAc-1-P), which is converted into UDP-GlcNAc by the transfer of uridine 5-monophosphate (from uridine 5-triphosphate), a reaction catalyzed by the N-terminal domain.</text>
</comment>
<comment type="catalytic activity">
    <reaction evidence="1">
        <text>alpha-D-glucosamine 1-phosphate + acetyl-CoA = N-acetyl-alpha-D-glucosamine 1-phosphate + CoA + H(+)</text>
        <dbReference type="Rhea" id="RHEA:13725"/>
        <dbReference type="ChEBI" id="CHEBI:15378"/>
        <dbReference type="ChEBI" id="CHEBI:57287"/>
        <dbReference type="ChEBI" id="CHEBI:57288"/>
        <dbReference type="ChEBI" id="CHEBI:57776"/>
        <dbReference type="ChEBI" id="CHEBI:58516"/>
        <dbReference type="EC" id="2.3.1.157"/>
    </reaction>
</comment>
<comment type="catalytic activity">
    <reaction evidence="1">
        <text>N-acetyl-alpha-D-glucosamine 1-phosphate + UTP + H(+) = UDP-N-acetyl-alpha-D-glucosamine + diphosphate</text>
        <dbReference type="Rhea" id="RHEA:13509"/>
        <dbReference type="ChEBI" id="CHEBI:15378"/>
        <dbReference type="ChEBI" id="CHEBI:33019"/>
        <dbReference type="ChEBI" id="CHEBI:46398"/>
        <dbReference type="ChEBI" id="CHEBI:57705"/>
        <dbReference type="ChEBI" id="CHEBI:57776"/>
        <dbReference type="EC" id="2.7.7.23"/>
    </reaction>
</comment>
<comment type="cofactor">
    <cofactor evidence="1">
        <name>Mg(2+)</name>
        <dbReference type="ChEBI" id="CHEBI:18420"/>
    </cofactor>
    <text evidence="1">Binds 1 Mg(2+) ion per subunit.</text>
</comment>
<comment type="pathway">
    <text evidence="1">Nucleotide-sugar biosynthesis; UDP-N-acetyl-alpha-D-glucosamine biosynthesis; N-acetyl-alpha-D-glucosamine 1-phosphate from alpha-D-glucosamine 6-phosphate (route II): step 2/2.</text>
</comment>
<comment type="pathway">
    <text evidence="1">Nucleotide-sugar biosynthesis; UDP-N-acetyl-alpha-D-glucosamine biosynthesis; UDP-N-acetyl-alpha-D-glucosamine from N-acetyl-alpha-D-glucosamine 1-phosphate: step 1/1.</text>
</comment>
<comment type="pathway">
    <text evidence="1">Bacterial outer membrane biogenesis; LPS lipid A biosynthesis.</text>
</comment>
<comment type="subunit">
    <text evidence="1">Homotrimer.</text>
</comment>
<comment type="subcellular location">
    <subcellularLocation>
        <location evidence="1">Cytoplasm</location>
    </subcellularLocation>
</comment>
<comment type="similarity">
    <text evidence="1">In the N-terminal section; belongs to the N-acetylglucosamine-1-phosphate uridyltransferase family.</text>
</comment>
<comment type="similarity">
    <text evidence="1">In the C-terminal section; belongs to the transferase hexapeptide repeat family.</text>
</comment>
<accession>Q1Q830</accession>
<sequence>MTSSLSVIILAAGKGTRMQSAKPKVLQTLAGKSLLGHVLDTCHQLTVDDTIIVHGFGGEQVQDHIDQQYAHLPITWVAQTEQLGTGHAVKVTLSELPKDGQSLILYGDVPLVSCQTLATLQDANTDGMSMLTLTVDNPFGLGRIKRDKDGNIEAIIEQKDANSDEQQIQEINSGIYCVDNALLHKFLPKLSNDNAQQEYYLTDIVKMAVADGITIAAIEPEHTFEIEGVNNRQQLASLERTWQGKLVADLQEAGVQFADPTRVDIRGTLSAGQDVFVDVGVVFEGDCVLGDNVYIEAGCVIKNAQIGNACHIKPYCVIDSAEVGAGVDIGPFAHLRPETILSDNSKVGNFVEIKKSTIGDGSKVNHLSYIGDATIGTGVNVGAGVITCNYDGVNKSQTIIDDNAFIGSNSSLVAPVKIGDTATVAAGSVITKNVDAHALAFGRARQTQKNDFKRPTKK</sequence>
<dbReference type="EC" id="2.7.7.23" evidence="1"/>
<dbReference type="EC" id="2.3.1.157" evidence="1"/>
<dbReference type="EMBL" id="CP000323">
    <property type="protein sequence ID" value="ABE76173.1"/>
    <property type="molecule type" value="Genomic_DNA"/>
</dbReference>
<dbReference type="RefSeq" id="WP_011514701.1">
    <property type="nucleotide sequence ID" value="NC_007969.1"/>
</dbReference>
<dbReference type="SMR" id="Q1Q830"/>
<dbReference type="STRING" id="335284.Pcryo_2396"/>
<dbReference type="KEGG" id="pcr:Pcryo_2396"/>
<dbReference type="eggNOG" id="COG1207">
    <property type="taxonomic scope" value="Bacteria"/>
</dbReference>
<dbReference type="HOGENOM" id="CLU_029499_15_2_6"/>
<dbReference type="UniPathway" id="UPA00113">
    <property type="reaction ID" value="UER00532"/>
</dbReference>
<dbReference type="UniPathway" id="UPA00113">
    <property type="reaction ID" value="UER00533"/>
</dbReference>
<dbReference type="UniPathway" id="UPA00973"/>
<dbReference type="Proteomes" id="UP000002425">
    <property type="component" value="Chromosome"/>
</dbReference>
<dbReference type="GO" id="GO:0005737">
    <property type="term" value="C:cytoplasm"/>
    <property type="evidence" value="ECO:0007669"/>
    <property type="project" value="UniProtKB-SubCell"/>
</dbReference>
<dbReference type="GO" id="GO:0016020">
    <property type="term" value="C:membrane"/>
    <property type="evidence" value="ECO:0007669"/>
    <property type="project" value="GOC"/>
</dbReference>
<dbReference type="GO" id="GO:0019134">
    <property type="term" value="F:glucosamine-1-phosphate N-acetyltransferase activity"/>
    <property type="evidence" value="ECO:0007669"/>
    <property type="project" value="UniProtKB-UniRule"/>
</dbReference>
<dbReference type="GO" id="GO:0000287">
    <property type="term" value="F:magnesium ion binding"/>
    <property type="evidence" value="ECO:0007669"/>
    <property type="project" value="UniProtKB-UniRule"/>
</dbReference>
<dbReference type="GO" id="GO:0003977">
    <property type="term" value="F:UDP-N-acetylglucosamine diphosphorylase activity"/>
    <property type="evidence" value="ECO:0007669"/>
    <property type="project" value="UniProtKB-UniRule"/>
</dbReference>
<dbReference type="GO" id="GO:0000902">
    <property type="term" value="P:cell morphogenesis"/>
    <property type="evidence" value="ECO:0007669"/>
    <property type="project" value="UniProtKB-UniRule"/>
</dbReference>
<dbReference type="GO" id="GO:0071555">
    <property type="term" value="P:cell wall organization"/>
    <property type="evidence" value="ECO:0007669"/>
    <property type="project" value="UniProtKB-KW"/>
</dbReference>
<dbReference type="GO" id="GO:0009245">
    <property type="term" value="P:lipid A biosynthetic process"/>
    <property type="evidence" value="ECO:0007669"/>
    <property type="project" value="UniProtKB-UniRule"/>
</dbReference>
<dbReference type="GO" id="GO:0009252">
    <property type="term" value="P:peptidoglycan biosynthetic process"/>
    <property type="evidence" value="ECO:0007669"/>
    <property type="project" value="UniProtKB-UniRule"/>
</dbReference>
<dbReference type="GO" id="GO:0008360">
    <property type="term" value="P:regulation of cell shape"/>
    <property type="evidence" value="ECO:0007669"/>
    <property type="project" value="UniProtKB-KW"/>
</dbReference>
<dbReference type="GO" id="GO:0006048">
    <property type="term" value="P:UDP-N-acetylglucosamine biosynthetic process"/>
    <property type="evidence" value="ECO:0007669"/>
    <property type="project" value="UniProtKB-UniPathway"/>
</dbReference>
<dbReference type="CDD" id="cd02540">
    <property type="entry name" value="GT2_GlmU_N_bac"/>
    <property type="match status" value="1"/>
</dbReference>
<dbReference type="CDD" id="cd03353">
    <property type="entry name" value="LbH_GlmU_C"/>
    <property type="match status" value="1"/>
</dbReference>
<dbReference type="Gene3D" id="2.160.10.10">
    <property type="entry name" value="Hexapeptide repeat proteins"/>
    <property type="match status" value="1"/>
</dbReference>
<dbReference type="Gene3D" id="3.90.550.10">
    <property type="entry name" value="Spore Coat Polysaccharide Biosynthesis Protein SpsA, Chain A"/>
    <property type="match status" value="1"/>
</dbReference>
<dbReference type="HAMAP" id="MF_01631">
    <property type="entry name" value="GlmU"/>
    <property type="match status" value="1"/>
</dbReference>
<dbReference type="InterPro" id="IPR005882">
    <property type="entry name" value="Bifunctional_GlmU"/>
</dbReference>
<dbReference type="InterPro" id="IPR050065">
    <property type="entry name" value="GlmU-like"/>
</dbReference>
<dbReference type="InterPro" id="IPR038009">
    <property type="entry name" value="GlmU_C_LbH"/>
</dbReference>
<dbReference type="InterPro" id="IPR001451">
    <property type="entry name" value="Hexapep"/>
</dbReference>
<dbReference type="InterPro" id="IPR018357">
    <property type="entry name" value="Hexapep_transf_CS"/>
</dbReference>
<dbReference type="InterPro" id="IPR025877">
    <property type="entry name" value="MobA-like_NTP_Trfase"/>
</dbReference>
<dbReference type="InterPro" id="IPR029044">
    <property type="entry name" value="Nucleotide-diphossugar_trans"/>
</dbReference>
<dbReference type="InterPro" id="IPR011004">
    <property type="entry name" value="Trimer_LpxA-like_sf"/>
</dbReference>
<dbReference type="NCBIfam" id="TIGR01173">
    <property type="entry name" value="glmU"/>
    <property type="match status" value="1"/>
</dbReference>
<dbReference type="PANTHER" id="PTHR43584:SF3">
    <property type="entry name" value="BIFUNCTIONAL PROTEIN GLMU"/>
    <property type="match status" value="1"/>
</dbReference>
<dbReference type="PANTHER" id="PTHR43584">
    <property type="entry name" value="NUCLEOTIDYL TRANSFERASE"/>
    <property type="match status" value="1"/>
</dbReference>
<dbReference type="Pfam" id="PF00132">
    <property type="entry name" value="Hexapep"/>
    <property type="match status" value="1"/>
</dbReference>
<dbReference type="Pfam" id="PF14602">
    <property type="entry name" value="Hexapep_2"/>
    <property type="match status" value="1"/>
</dbReference>
<dbReference type="Pfam" id="PF12804">
    <property type="entry name" value="NTP_transf_3"/>
    <property type="match status" value="1"/>
</dbReference>
<dbReference type="SUPFAM" id="SSF53448">
    <property type="entry name" value="Nucleotide-diphospho-sugar transferases"/>
    <property type="match status" value="1"/>
</dbReference>
<dbReference type="SUPFAM" id="SSF51161">
    <property type="entry name" value="Trimeric LpxA-like enzymes"/>
    <property type="match status" value="1"/>
</dbReference>
<dbReference type="PROSITE" id="PS00101">
    <property type="entry name" value="HEXAPEP_TRANSFERASES"/>
    <property type="match status" value="1"/>
</dbReference>
<evidence type="ECO:0000255" key="1">
    <source>
        <dbReference type="HAMAP-Rule" id="MF_01631"/>
    </source>
</evidence>
<gene>
    <name evidence="1" type="primary">glmU</name>
    <name type="ordered locus">Pcryo_2396</name>
</gene>
<protein>
    <recommendedName>
        <fullName evidence="1">Bifunctional protein GlmU</fullName>
    </recommendedName>
    <domain>
        <recommendedName>
            <fullName evidence="1">UDP-N-acetylglucosamine pyrophosphorylase</fullName>
            <ecNumber evidence="1">2.7.7.23</ecNumber>
        </recommendedName>
        <alternativeName>
            <fullName evidence="1">N-acetylglucosamine-1-phosphate uridyltransferase</fullName>
        </alternativeName>
    </domain>
    <domain>
        <recommendedName>
            <fullName evidence="1">Glucosamine-1-phosphate N-acetyltransferase</fullName>
            <ecNumber evidence="1">2.3.1.157</ecNumber>
        </recommendedName>
    </domain>
</protein>